<name>DXR_LAWIP</name>
<reference key="1">
    <citation type="submission" date="2005-11" db="EMBL/GenBank/DDBJ databases">
        <title>The complete genome sequence of Lawsonia intracellularis: the causative agent of proliferative enteropathy.</title>
        <authorList>
            <person name="Kaur K."/>
            <person name="Zhang Q."/>
            <person name="Beckler D."/>
            <person name="Munir S."/>
            <person name="Li L."/>
            <person name="Kinsley K."/>
            <person name="Herron L."/>
            <person name="Peterson A."/>
            <person name="May B."/>
            <person name="Singh S."/>
            <person name="Gebhart C."/>
            <person name="Kapur V."/>
        </authorList>
    </citation>
    <scope>NUCLEOTIDE SEQUENCE [LARGE SCALE GENOMIC DNA]</scope>
    <source>
        <strain>PHE/MN1-00</strain>
    </source>
</reference>
<keyword id="KW-0414">Isoprene biosynthesis</keyword>
<keyword id="KW-0464">Manganese</keyword>
<keyword id="KW-0479">Metal-binding</keyword>
<keyword id="KW-0521">NADP</keyword>
<keyword id="KW-0560">Oxidoreductase</keyword>
<keyword id="KW-1185">Reference proteome</keyword>
<dbReference type="EC" id="1.1.1.267" evidence="1"/>
<dbReference type="EMBL" id="AM180252">
    <property type="protein sequence ID" value="CAJ54442.1"/>
    <property type="molecule type" value="Genomic_DNA"/>
</dbReference>
<dbReference type="RefSeq" id="WP_011526471.1">
    <property type="nucleotide sequence ID" value="NC_008011.1"/>
</dbReference>
<dbReference type="SMR" id="Q1MRD4"/>
<dbReference type="STRING" id="363253.LI0386"/>
<dbReference type="KEGG" id="lip:LI0386"/>
<dbReference type="eggNOG" id="COG0743">
    <property type="taxonomic scope" value="Bacteria"/>
</dbReference>
<dbReference type="HOGENOM" id="CLU_035714_4_0_7"/>
<dbReference type="OrthoDB" id="9806546at2"/>
<dbReference type="UniPathway" id="UPA00056">
    <property type="reaction ID" value="UER00092"/>
</dbReference>
<dbReference type="Proteomes" id="UP000002430">
    <property type="component" value="Chromosome"/>
</dbReference>
<dbReference type="GO" id="GO:0030604">
    <property type="term" value="F:1-deoxy-D-xylulose-5-phosphate reductoisomerase activity"/>
    <property type="evidence" value="ECO:0007669"/>
    <property type="project" value="UniProtKB-UniRule"/>
</dbReference>
<dbReference type="GO" id="GO:0030145">
    <property type="term" value="F:manganese ion binding"/>
    <property type="evidence" value="ECO:0007669"/>
    <property type="project" value="TreeGrafter"/>
</dbReference>
<dbReference type="GO" id="GO:0070402">
    <property type="term" value="F:NADPH binding"/>
    <property type="evidence" value="ECO:0007669"/>
    <property type="project" value="InterPro"/>
</dbReference>
<dbReference type="GO" id="GO:0051484">
    <property type="term" value="P:isopentenyl diphosphate biosynthetic process, methylerythritol 4-phosphate pathway involved in terpenoid biosynthetic process"/>
    <property type="evidence" value="ECO:0007669"/>
    <property type="project" value="TreeGrafter"/>
</dbReference>
<dbReference type="FunFam" id="3.40.50.720:FF:000045">
    <property type="entry name" value="1-deoxy-D-xylulose 5-phosphate reductoisomerase"/>
    <property type="match status" value="1"/>
</dbReference>
<dbReference type="Gene3D" id="1.10.1740.10">
    <property type="match status" value="1"/>
</dbReference>
<dbReference type="Gene3D" id="3.40.50.720">
    <property type="entry name" value="NAD(P)-binding Rossmann-like Domain"/>
    <property type="match status" value="1"/>
</dbReference>
<dbReference type="HAMAP" id="MF_00183">
    <property type="entry name" value="DXP_reductoisom"/>
    <property type="match status" value="1"/>
</dbReference>
<dbReference type="InterPro" id="IPR003821">
    <property type="entry name" value="DXP_reductoisomerase"/>
</dbReference>
<dbReference type="InterPro" id="IPR013644">
    <property type="entry name" value="DXP_reductoisomerase_C"/>
</dbReference>
<dbReference type="InterPro" id="IPR013512">
    <property type="entry name" value="DXP_reductoisomerase_N"/>
</dbReference>
<dbReference type="InterPro" id="IPR026877">
    <property type="entry name" value="DXPR_C"/>
</dbReference>
<dbReference type="InterPro" id="IPR036169">
    <property type="entry name" value="DXPR_C_sf"/>
</dbReference>
<dbReference type="InterPro" id="IPR036291">
    <property type="entry name" value="NAD(P)-bd_dom_sf"/>
</dbReference>
<dbReference type="NCBIfam" id="TIGR00243">
    <property type="entry name" value="Dxr"/>
    <property type="match status" value="1"/>
</dbReference>
<dbReference type="PANTHER" id="PTHR30525">
    <property type="entry name" value="1-DEOXY-D-XYLULOSE 5-PHOSPHATE REDUCTOISOMERASE"/>
    <property type="match status" value="1"/>
</dbReference>
<dbReference type="PANTHER" id="PTHR30525:SF0">
    <property type="entry name" value="1-DEOXY-D-XYLULOSE 5-PHOSPHATE REDUCTOISOMERASE, CHLOROPLASTIC"/>
    <property type="match status" value="1"/>
</dbReference>
<dbReference type="Pfam" id="PF08436">
    <property type="entry name" value="DXP_redisom_C"/>
    <property type="match status" value="1"/>
</dbReference>
<dbReference type="Pfam" id="PF02670">
    <property type="entry name" value="DXP_reductoisom"/>
    <property type="match status" value="1"/>
</dbReference>
<dbReference type="Pfam" id="PF13288">
    <property type="entry name" value="DXPR_C"/>
    <property type="match status" value="1"/>
</dbReference>
<dbReference type="PIRSF" id="PIRSF006205">
    <property type="entry name" value="Dxp_reductismrs"/>
    <property type="match status" value="1"/>
</dbReference>
<dbReference type="SUPFAM" id="SSF69055">
    <property type="entry name" value="1-deoxy-D-xylulose-5-phosphate reductoisomerase, C-terminal domain"/>
    <property type="match status" value="1"/>
</dbReference>
<dbReference type="SUPFAM" id="SSF55347">
    <property type="entry name" value="Glyceraldehyde-3-phosphate dehydrogenase-like, C-terminal domain"/>
    <property type="match status" value="1"/>
</dbReference>
<dbReference type="SUPFAM" id="SSF51735">
    <property type="entry name" value="NAD(P)-binding Rossmann-fold domains"/>
    <property type="match status" value="1"/>
</dbReference>
<accession>Q1MRD4</accession>
<gene>
    <name evidence="1" type="primary">dxr</name>
    <name type="ordered locus">LI0386</name>
</gene>
<evidence type="ECO:0000255" key="1">
    <source>
        <dbReference type="HAMAP-Rule" id="MF_00183"/>
    </source>
</evidence>
<feature type="chain" id="PRO_1000020271" description="1-deoxy-D-xylulose 5-phosphate reductoisomerase">
    <location>
        <begin position="1"/>
        <end position="402"/>
    </location>
</feature>
<feature type="binding site" evidence="1">
    <location>
        <position position="27"/>
    </location>
    <ligand>
        <name>NADPH</name>
        <dbReference type="ChEBI" id="CHEBI:57783"/>
    </ligand>
</feature>
<feature type="binding site" evidence="1">
    <location>
        <position position="28"/>
    </location>
    <ligand>
        <name>NADPH</name>
        <dbReference type="ChEBI" id="CHEBI:57783"/>
    </ligand>
</feature>
<feature type="binding site" evidence="1">
    <location>
        <position position="29"/>
    </location>
    <ligand>
        <name>NADPH</name>
        <dbReference type="ChEBI" id="CHEBI:57783"/>
    </ligand>
</feature>
<feature type="binding site" evidence="1">
    <location>
        <position position="30"/>
    </location>
    <ligand>
        <name>NADPH</name>
        <dbReference type="ChEBI" id="CHEBI:57783"/>
    </ligand>
</feature>
<feature type="binding site" evidence="1">
    <location>
        <position position="53"/>
    </location>
    <ligand>
        <name>NADPH</name>
        <dbReference type="ChEBI" id="CHEBI:57783"/>
    </ligand>
</feature>
<feature type="binding site" evidence="1">
    <location>
        <position position="54"/>
    </location>
    <ligand>
        <name>NADPH</name>
        <dbReference type="ChEBI" id="CHEBI:57783"/>
    </ligand>
</feature>
<feature type="binding site" evidence="1">
    <location>
        <position position="55"/>
    </location>
    <ligand>
        <name>NADPH</name>
        <dbReference type="ChEBI" id="CHEBI:57783"/>
    </ligand>
</feature>
<feature type="binding site" evidence="1">
    <location>
        <position position="140"/>
    </location>
    <ligand>
        <name>NADPH</name>
        <dbReference type="ChEBI" id="CHEBI:57783"/>
    </ligand>
</feature>
<feature type="binding site" evidence="1">
    <location>
        <position position="141"/>
    </location>
    <ligand>
        <name>1-deoxy-D-xylulose 5-phosphate</name>
        <dbReference type="ChEBI" id="CHEBI:57792"/>
    </ligand>
</feature>
<feature type="binding site" evidence="1">
    <location>
        <position position="142"/>
    </location>
    <ligand>
        <name>NADPH</name>
        <dbReference type="ChEBI" id="CHEBI:57783"/>
    </ligand>
</feature>
<feature type="binding site" evidence="1">
    <location>
        <position position="166"/>
    </location>
    <ligand>
        <name>Mn(2+)</name>
        <dbReference type="ChEBI" id="CHEBI:29035"/>
    </ligand>
</feature>
<feature type="binding site" evidence="1">
    <location>
        <position position="167"/>
    </location>
    <ligand>
        <name>1-deoxy-D-xylulose 5-phosphate</name>
        <dbReference type="ChEBI" id="CHEBI:57792"/>
    </ligand>
</feature>
<feature type="binding site" evidence="1">
    <location>
        <position position="168"/>
    </location>
    <ligand>
        <name>1-deoxy-D-xylulose 5-phosphate</name>
        <dbReference type="ChEBI" id="CHEBI:57792"/>
    </ligand>
</feature>
<feature type="binding site" evidence="1">
    <location>
        <position position="168"/>
    </location>
    <ligand>
        <name>Mn(2+)</name>
        <dbReference type="ChEBI" id="CHEBI:29035"/>
    </ligand>
</feature>
<feature type="binding site" evidence="1">
    <location>
        <position position="192"/>
    </location>
    <ligand>
        <name>1-deoxy-D-xylulose 5-phosphate</name>
        <dbReference type="ChEBI" id="CHEBI:57792"/>
    </ligand>
</feature>
<feature type="binding site" evidence="1">
    <location>
        <position position="215"/>
    </location>
    <ligand>
        <name>1-deoxy-D-xylulose 5-phosphate</name>
        <dbReference type="ChEBI" id="CHEBI:57792"/>
    </ligand>
</feature>
<feature type="binding site" evidence="1">
    <location>
        <position position="221"/>
    </location>
    <ligand>
        <name>NADPH</name>
        <dbReference type="ChEBI" id="CHEBI:57783"/>
    </ligand>
</feature>
<feature type="binding site" evidence="1">
    <location>
        <position position="228"/>
    </location>
    <ligand>
        <name>1-deoxy-D-xylulose 5-phosphate</name>
        <dbReference type="ChEBI" id="CHEBI:57792"/>
    </ligand>
</feature>
<feature type="binding site" evidence="1">
    <location>
        <position position="233"/>
    </location>
    <ligand>
        <name>1-deoxy-D-xylulose 5-phosphate</name>
        <dbReference type="ChEBI" id="CHEBI:57792"/>
    </ligand>
</feature>
<feature type="binding site" evidence="1">
    <location>
        <position position="234"/>
    </location>
    <ligand>
        <name>1-deoxy-D-xylulose 5-phosphate</name>
        <dbReference type="ChEBI" id="CHEBI:57792"/>
    </ligand>
</feature>
<feature type="binding site" evidence="1">
    <location>
        <position position="237"/>
    </location>
    <ligand>
        <name>1-deoxy-D-xylulose 5-phosphate</name>
        <dbReference type="ChEBI" id="CHEBI:57792"/>
    </ligand>
</feature>
<feature type="binding site" evidence="1">
    <location>
        <position position="237"/>
    </location>
    <ligand>
        <name>Mn(2+)</name>
        <dbReference type="ChEBI" id="CHEBI:29035"/>
    </ligand>
</feature>
<organism>
    <name type="scientific">Lawsonia intracellularis (strain PHE/MN1-00)</name>
    <dbReference type="NCBI Taxonomy" id="363253"/>
    <lineage>
        <taxon>Bacteria</taxon>
        <taxon>Pseudomonadati</taxon>
        <taxon>Thermodesulfobacteriota</taxon>
        <taxon>Desulfovibrionia</taxon>
        <taxon>Desulfovibrionales</taxon>
        <taxon>Desulfovibrionaceae</taxon>
        <taxon>Lawsonia</taxon>
    </lineage>
</organism>
<sequence>MFTYITSLPSPEWEKSFPRTISILGSTGSIGTNALDVIKSHKELFHIVALGGGKNVQLLAKQAIQWKPDYLAVQDETSKEALIPLLPINYKPSIFVGQQGYVKLASLPEVTTVLSAQVGAAGLHGTVAAAKNGKVICLANKETLVLAGKLIKNLCLQSGAVILPVDSEHNAIFQALYTRNPKTVQNIILTASGGPFRNKKYEFLKNVTPEQAINHPNWKMGTKISVDSATMINKGLEIIEAHYLYGLPSEQIKIVVHPQSYVHSLVEFTDHSLMAHLGTADMRMPIAHCLAWPNYLNVGVEPFVLSKIGTLTFEEPDLDSFPCINLARDALVAGTSAQIILNAANEVAVDAFLKKQIGFMDIPILISKALEADSTPEPTTLESIEALDQQTRHTISQWIEVH</sequence>
<proteinExistence type="inferred from homology"/>
<comment type="function">
    <text evidence="1">Catalyzes the NADPH-dependent rearrangement and reduction of 1-deoxy-D-xylulose-5-phosphate (DXP) to 2-C-methyl-D-erythritol 4-phosphate (MEP).</text>
</comment>
<comment type="catalytic activity">
    <reaction evidence="1">
        <text>2-C-methyl-D-erythritol 4-phosphate + NADP(+) = 1-deoxy-D-xylulose 5-phosphate + NADPH + H(+)</text>
        <dbReference type="Rhea" id="RHEA:13717"/>
        <dbReference type="ChEBI" id="CHEBI:15378"/>
        <dbReference type="ChEBI" id="CHEBI:57783"/>
        <dbReference type="ChEBI" id="CHEBI:57792"/>
        <dbReference type="ChEBI" id="CHEBI:58262"/>
        <dbReference type="ChEBI" id="CHEBI:58349"/>
        <dbReference type="EC" id="1.1.1.267"/>
    </reaction>
    <physiologicalReaction direction="right-to-left" evidence="1">
        <dbReference type="Rhea" id="RHEA:13719"/>
    </physiologicalReaction>
</comment>
<comment type="cofactor">
    <cofactor evidence="1">
        <name>Mg(2+)</name>
        <dbReference type="ChEBI" id="CHEBI:18420"/>
    </cofactor>
    <cofactor evidence="1">
        <name>Mn(2+)</name>
        <dbReference type="ChEBI" id="CHEBI:29035"/>
    </cofactor>
</comment>
<comment type="pathway">
    <text evidence="1">Isoprenoid biosynthesis; isopentenyl diphosphate biosynthesis via DXP pathway; isopentenyl diphosphate from 1-deoxy-D-xylulose 5-phosphate: step 1/6.</text>
</comment>
<comment type="similarity">
    <text evidence="1">Belongs to the DXR family.</text>
</comment>
<protein>
    <recommendedName>
        <fullName evidence="1">1-deoxy-D-xylulose 5-phosphate reductoisomerase</fullName>
        <shortName evidence="1">DXP reductoisomerase</shortName>
        <ecNumber evidence="1">1.1.1.267</ecNumber>
    </recommendedName>
    <alternativeName>
        <fullName evidence="1">1-deoxyxylulose-5-phosphate reductoisomerase</fullName>
    </alternativeName>
    <alternativeName>
        <fullName evidence="1">2-C-methyl-D-erythritol 4-phosphate synthase</fullName>
    </alternativeName>
</protein>